<feature type="signal peptide" evidence="1">
    <location>
        <begin position="1"/>
        <end position="26"/>
    </location>
</feature>
<feature type="chain" id="PRO_0000032983" description="Somatotropin">
    <location>
        <begin position="27"/>
        <end position="216"/>
    </location>
</feature>
<feature type="binding site" evidence="1">
    <location>
        <position position="45"/>
    </location>
    <ligand>
        <name>Zn(2+)</name>
        <dbReference type="ChEBI" id="CHEBI:29105"/>
    </ligand>
</feature>
<feature type="binding site" evidence="1">
    <location>
        <position position="198"/>
    </location>
    <ligand>
        <name>Zn(2+)</name>
        <dbReference type="ChEBI" id="CHEBI:29105"/>
    </ligand>
</feature>
<feature type="modified residue" description="Phosphoserine" evidence="2">
    <location>
        <position position="131"/>
    </location>
</feature>
<feature type="disulfide bond" evidence="1">
    <location>
        <begin position="78"/>
        <end position="189"/>
    </location>
</feature>
<feature type="disulfide bond" evidence="1">
    <location>
        <begin position="206"/>
        <end position="214"/>
    </location>
</feature>
<feature type="sequence conflict" description="In Ref. 2; AAA96142." evidence="3" ref="2">
    <original>N</original>
    <variation>T</variation>
    <location>
        <position position="7"/>
    </location>
</feature>
<feature type="sequence conflict" description="In Ref. 2; AAA96142." evidence="3" ref="2">
    <original>T</original>
    <variation>A</variation>
    <location>
        <position position="26"/>
    </location>
</feature>
<feature type="sequence conflict" description="In Ref. 2; AAA96142." evidence="3" ref="2">
    <original>G</original>
    <variation>A</variation>
    <location>
        <position position="159"/>
    </location>
</feature>
<feature type="sequence conflict" description="In Ref. 2; AAA96142." evidence="3" ref="2">
    <original>L</original>
    <variation>P</variation>
    <location>
        <position position="181"/>
    </location>
</feature>
<gene>
    <name type="primary">GH1</name>
</gene>
<keyword id="KW-1015">Disulfide bond</keyword>
<keyword id="KW-0372">Hormone</keyword>
<keyword id="KW-0479">Metal-binding</keyword>
<keyword id="KW-0597">Phosphoprotein</keyword>
<keyword id="KW-1185">Reference proteome</keyword>
<keyword id="KW-0964">Secreted</keyword>
<keyword id="KW-0732">Signal</keyword>
<keyword id="KW-0862">Zinc</keyword>
<organism>
    <name type="scientific">Felis catus</name>
    <name type="common">Cat</name>
    <name type="synonym">Felis silvestris catus</name>
    <dbReference type="NCBI Taxonomy" id="9685"/>
    <lineage>
        <taxon>Eukaryota</taxon>
        <taxon>Metazoa</taxon>
        <taxon>Chordata</taxon>
        <taxon>Craniata</taxon>
        <taxon>Vertebrata</taxon>
        <taxon>Euteleostomi</taxon>
        <taxon>Mammalia</taxon>
        <taxon>Eutheria</taxon>
        <taxon>Laurasiatheria</taxon>
        <taxon>Carnivora</taxon>
        <taxon>Feliformia</taxon>
        <taxon>Felidae</taxon>
        <taxon>Felinae</taxon>
        <taxon>Felis</taxon>
    </lineage>
</organism>
<reference key="1">
    <citation type="journal article" date="1996" name="Gene">
        <title>Cloning of the cDNAs coding for cat growth hormone and prolactin.</title>
        <authorList>
            <person name="Warren W.C."/>
            <person name="Bentle K.A."/>
            <person name="Bogosian G."/>
        </authorList>
    </citation>
    <scope>NUCLEOTIDE SEQUENCE [MRNA]</scope>
    <source>
        <tissue>Pituitary</tissue>
    </source>
</reference>
<reference key="2">
    <citation type="journal article" date="1995" name="Gene">
        <title>Cloning and sequencing of cDNA encoding the cat growth hormone.</title>
        <authorList>
            <person name="Castro-Peralta F."/>
            <person name="Barrera-Saldana H.A."/>
        </authorList>
    </citation>
    <scope>NUCLEOTIDE SEQUENCE [MRNA]</scope>
    <source>
        <tissue>Pituitary</tissue>
    </source>
</reference>
<protein>
    <recommendedName>
        <fullName>Somatotropin</fullName>
    </recommendedName>
    <alternativeName>
        <fullName>Growth hormone</fullName>
    </alternativeName>
</protein>
<comment type="function">
    <text>Plays an important role in growth control. Its major role in stimulating body growth is to stimulate the liver and other tissues to secrete IGF1. It stimulates both the differentiation and proliferation of myoblasts. It also stimulates amino acid uptake and protein synthesis in muscle and other tissues.</text>
</comment>
<comment type="subcellular location">
    <subcellularLocation>
        <location>Secreted</location>
    </subcellularLocation>
</comment>
<comment type="similarity">
    <text evidence="3">Belongs to the somatotropin/prolactin family.</text>
</comment>
<dbReference type="EMBL" id="U25973">
    <property type="protein sequence ID" value="AAA67294.1"/>
    <property type="molecule type" value="mRNA"/>
</dbReference>
<dbReference type="EMBL" id="U13390">
    <property type="protein sequence ID" value="AAA96142.1"/>
    <property type="molecule type" value="mRNA"/>
</dbReference>
<dbReference type="PIR" id="JC4632">
    <property type="entry name" value="JC4632"/>
</dbReference>
<dbReference type="RefSeq" id="NP_001009337.1">
    <property type="nucleotide sequence ID" value="NM_001009337.1"/>
</dbReference>
<dbReference type="SMR" id="P46404"/>
<dbReference type="FunCoup" id="P46404">
    <property type="interactions" value="9"/>
</dbReference>
<dbReference type="STRING" id="9685.ENSFCAP00000003232"/>
<dbReference type="PaxDb" id="9685-ENSFCAP00000003232"/>
<dbReference type="GeneID" id="493931"/>
<dbReference type="KEGG" id="fca:493931"/>
<dbReference type="CTD" id="2688"/>
<dbReference type="eggNOG" id="ENOG502R5GJ">
    <property type="taxonomic scope" value="Eukaryota"/>
</dbReference>
<dbReference type="InParanoid" id="P46404"/>
<dbReference type="OrthoDB" id="9925773at2759"/>
<dbReference type="Proteomes" id="UP000011712">
    <property type="component" value="Unplaced"/>
</dbReference>
<dbReference type="GO" id="GO:0005615">
    <property type="term" value="C:extracellular space"/>
    <property type="evidence" value="ECO:0000318"/>
    <property type="project" value="GO_Central"/>
</dbReference>
<dbReference type="GO" id="GO:0008083">
    <property type="term" value="F:growth factor activity"/>
    <property type="evidence" value="ECO:0000318"/>
    <property type="project" value="GO_Central"/>
</dbReference>
<dbReference type="GO" id="GO:0005131">
    <property type="term" value="F:growth hormone receptor binding"/>
    <property type="evidence" value="ECO:0000318"/>
    <property type="project" value="GO_Central"/>
</dbReference>
<dbReference type="GO" id="GO:0005179">
    <property type="term" value="F:hormone activity"/>
    <property type="evidence" value="ECO:0000318"/>
    <property type="project" value="GO_Central"/>
</dbReference>
<dbReference type="GO" id="GO:0046872">
    <property type="term" value="F:metal ion binding"/>
    <property type="evidence" value="ECO:0007669"/>
    <property type="project" value="UniProtKB-KW"/>
</dbReference>
<dbReference type="GO" id="GO:0048513">
    <property type="term" value="P:animal organ development"/>
    <property type="evidence" value="ECO:0000318"/>
    <property type="project" value="GO_Central"/>
</dbReference>
<dbReference type="GO" id="GO:0060396">
    <property type="term" value="P:growth hormone receptor signaling pathway"/>
    <property type="evidence" value="ECO:0000318"/>
    <property type="project" value="GO_Central"/>
</dbReference>
<dbReference type="GO" id="GO:0046427">
    <property type="term" value="P:positive regulation of receptor signaling pathway via JAK-STAT"/>
    <property type="evidence" value="ECO:0000318"/>
    <property type="project" value="GO_Central"/>
</dbReference>
<dbReference type="GO" id="GO:0031667">
    <property type="term" value="P:response to nutrient levels"/>
    <property type="evidence" value="ECO:0000318"/>
    <property type="project" value="GO_Central"/>
</dbReference>
<dbReference type="CDD" id="cd10285">
    <property type="entry name" value="somatotropin_like"/>
    <property type="match status" value="1"/>
</dbReference>
<dbReference type="FunFam" id="1.20.1250.10:FF:000002">
    <property type="entry name" value="Growth hormone"/>
    <property type="match status" value="1"/>
</dbReference>
<dbReference type="Gene3D" id="1.20.1250.10">
    <property type="match status" value="1"/>
</dbReference>
<dbReference type="InterPro" id="IPR009079">
    <property type="entry name" value="4_helix_cytokine-like_core"/>
</dbReference>
<dbReference type="InterPro" id="IPR034975">
    <property type="entry name" value="Somatotropin"/>
</dbReference>
<dbReference type="InterPro" id="IPR001400">
    <property type="entry name" value="Somatotropin/Prolactin"/>
</dbReference>
<dbReference type="InterPro" id="IPR018116">
    <property type="entry name" value="Somatotropin_CS"/>
</dbReference>
<dbReference type="PANTHER" id="PTHR11417:SF2">
    <property type="entry name" value="SOMATOTROPIN"/>
    <property type="match status" value="1"/>
</dbReference>
<dbReference type="PANTHER" id="PTHR11417">
    <property type="entry name" value="SOMATOTROPIN,PROLACTIN"/>
    <property type="match status" value="1"/>
</dbReference>
<dbReference type="Pfam" id="PF00103">
    <property type="entry name" value="Hormone_1"/>
    <property type="match status" value="1"/>
</dbReference>
<dbReference type="PRINTS" id="PR00836">
    <property type="entry name" value="SOMATOTROPIN"/>
</dbReference>
<dbReference type="SUPFAM" id="SSF47266">
    <property type="entry name" value="4-helical cytokines"/>
    <property type="match status" value="1"/>
</dbReference>
<dbReference type="PROSITE" id="PS00266">
    <property type="entry name" value="SOMATOTROPIN_1"/>
    <property type="match status" value="1"/>
</dbReference>
<dbReference type="PROSITE" id="PS00338">
    <property type="entry name" value="SOMATOTROPIN_2"/>
    <property type="match status" value="1"/>
</dbReference>
<name>SOMA_FELCA</name>
<proteinExistence type="evidence at transcript level"/>
<accession>P46404</accession>
<sequence length="216" mass="24454">MAAGPRNSVLLAFALLCLPWPQEVGTFPAMPLSSLFANAVLRAQHLHQLAADTYKEFERAYIPEGQRYSIQNAQAAFCFSETIPAPTGKDEAQQRSDVELLRFSLLLIQSWLGPVQFLSRVFTNSLVFGTSDRVYEKLKDLEEGIQALMRELEDGSPRGGQILKQTYDKFDTNLRSDDALLKNYGLLSCFKKDLHKAETYLRVMKCRRFVESSCAF</sequence>
<evidence type="ECO:0000250" key="1"/>
<evidence type="ECO:0000250" key="2">
    <source>
        <dbReference type="UniProtKB" id="P01241"/>
    </source>
</evidence>
<evidence type="ECO:0000305" key="3"/>